<keyword id="KW-0963">Cytoplasm</keyword>
<keyword id="KW-0342">GTP-binding</keyword>
<keyword id="KW-0436">Ligase</keyword>
<keyword id="KW-0460">Magnesium</keyword>
<keyword id="KW-0479">Metal-binding</keyword>
<keyword id="KW-0547">Nucleotide-binding</keyword>
<keyword id="KW-0658">Purine biosynthesis</keyword>
<keyword id="KW-1185">Reference proteome</keyword>
<dbReference type="EC" id="6.3.4.4" evidence="2"/>
<dbReference type="EMBL" id="AAGK01000004">
    <property type="protein sequence ID" value="EAN31385.1"/>
    <property type="molecule type" value="Genomic_DNA"/>
</dbReference>
<dbReference type="RefSeq" id="XP_763668.1">
    <property type="nucleotide sequence ID" value="XM_758575.1"/>
</dbReference>
<dbReference type="SMR" id="Q4N3F4"/>
<dbReference type="FunCoup" id="Q4N3F4">
    <property type="interactions" value="236"/>
</dbReference>
<dbReference type="STRING" id="5875.Q4N3F4"/>
<dbReference type="EnsemblProtists" id="EAN31385">
    <property type="protein sequence ID" value="EAN31385"/>
    <property type="gene ID" value="TP04_0033"/>
</dbReference>
<dbReference type="GeneID" id="3500512"/>
<dbReference type="KEGG" id="tpv:TP04_0033"/>
<dbReference type="VEuPathDB" id="PiroplasmaDB:TpMuguga_04g00033"/>
<dbReference type="eggNOG" id="KOG1355">
    <property type="taxonomic scope" value="Eukaryota"/>
</dbReference>
<dbReference type="InParanoid" id="Q4N3F4"/>
<dbReference type="OMA" id="FHHAKPI"/>
<dbReference type="UniPathway" id="UPA00075">
    <property type="reaction ID" value="UER00335"/>
</dbReference>
<dbReference type="Proteomes" id="UP000001949">
    <property type="component" value="Unassembled WGS sequence"/>
</dbReference>
<dbReference type="GO" id="GO:0005737">
    <property type="term" value="C:cytoplasm"/>
    <property type="evidence" value="ECO:0007669"/>
    <property type="project" value="UniProtKB-SubCell"/>
</dbReference>
<dbReference type="GO" id="GO:0004019">
    <property type="term" value="F:adenylosuccinate synthase activity"/>
    <property type="evidence" value="ECO:0007669"/>
    <property type="project" value="UniProtKB-UniRule"/>
</dbReference>
<dbReference type="GO" id="GO:0005525">
    <property type="term" value="F:GTP binding"/>
    <property type="evidence" value="ECO:0007669"/>
    <property type="project" value="UniProtKB-UniRule"/>
</dbReference>
<dbReference type="GO" id="GO:0000287">
    <property type="term" value="F:magnesium ion binding"/>
    <property type="evidence" value="ECO:0007669"/>
    <property type="project" value="UniProtKB-UniRule"/>
</dbReference>
<dbReference type="GO" id="GO:0044208">
    <property type="term" value="P:'de novo' AMP biosynthetic process"/>
    <property type="evidence" value="ECO:0007669"/>
    <property type="project" value="UniProtKB-UniRule"/>
</dbReference>
<dbReference type="GO" id="GO:0046040">
    <property type="term" value="P:IMP metabolic process"/>
    <property type="evidence" value="ECO:0007669"/>
    <property type="project" value="TreeGrafter"/>
</dbReference>
<dbReference type="CDD" id="cd03108">
    <property type="entry name" value="AdSS"/>
    <property type="match status" value="1"/>
</dbReference>
<dbReference type="FunFam" id="3.90.170.10:FF:000001">
    <property type="entry name" value="Adenylosuccinate synthetase"/>
    <property type="match status" value="1"/>
</dbReference>
<dbReference type="Gene3D" id="3.40.440.10">
    <property type="entry name" value="Adenylosuccinate Synthetase, subunit A, domain 1"/>
    <property type="match status" value="1"/>
</dbReference>
<dbReference type="Gene3D" id="1.10.300.10">
    <property type="entry name" value="Adenylosuccinate Synthetase, subunit A, domain 2"/>
    <property type="match status" value="1"/>
</dbReference>
<dbReference type="Gene3D" id="3.90.170.10">
    <property type="entry name" value="Adenylosuccinate Synthetase, subunit A, domain 3"/>
    <property type="match status" value="1"/>
</dbReference>
<dbReference type="HAMAP" id="MF_00011">
    <property type="entry name" value="Adenylosucc_synth"/>
    <property type="match status" value="1"/>
</dbReference>
<dbReference type="InterPro" id="IPR018220">
    <property type="entry name" value="Adenylosuccin_syn_GTP-bd"/>
</dbReference>
<dbReference type="InterPro" id="IPR042109">
    <property type="entry name" value="Adenylosuccinate_synth_dom1"/>
</dbReference>
<dbReference type="InterPro" id="IPR042110">
    <property type="entry name" value="Adenylosuccinate_synth_dom2"/>
</dbReference>
<dbReference type="InterPro" id="IPR042111">
    <property type="entry name" value="Adenylosuccinate_synth_dom3"/>
</dbReference>
<dbReference type="InterPro" id="IPR001114">
    <property type="entry name" value="Adenylosuccinate_synthetase"/>
</dbReference>
<dbReference type="InterPro" id="IPR027417">
    <property type="entry name" value="P-loop_NTPase"/>
</dbReference>
<dbReference type="NCBIfam" id="NF002223">
    <property type="entry name" value="PRK01117.1"/>
    <property type="match status" value="1"/>
</dbReference>
<dbReference type="NCBIfam" id="TIGR00184">
    <property type="entry name" value="purA"/>
    <property type="match status" value="1"/>
</dbReference>
<dbReference type="PANTHER" id="PTHR11846">
    <property type="entry name" value="ADENYLOSUCCINATE SYNTHETASE"/>
    <property type="match status" value="1"/>
</dbReference>
<dbReference type="PANTHER" id="PTHR11846:SF0">
    <property type="entry name" value="ADENYLOSUCCINATE SYNTHETASE"/>
    <property type="match status" value="1"/>
</dbReference>
<dbReference type="Pfam" id="PF00709">
    <property type="entry name" value="Adenylsucc_synt"/>
    <property type="match status" value="1"/>
</dbReference>
<dbReference type="SMART" id="SM00788">
    <property type="entry name" value="Adenylsucc_synt"/>
    <property type="match status" value="1"/>
</dbReference>
<dbReference type="SUPFAM" id="SSF52540">
    <property type="entry name" value="P-loop containing nucleoside triphosphate hydrolases"/>
    <property type="match status" value="1"/>
</dbReference>
<dbReference type="PROSITE" id="PS01266">
    <property type="entry name" value="ADENYLOSUCCIN_SYN_1"/>
    <property type="match status" value="1"/>
</dbReference>
<gene>
    <name type="ordered locus">TP04_0033</name>
</gene>
<protein>
    <recommendedName>
        <fullName evidence="2">Adenylosuccinate synthetase</fullName>
        <shortName evidence="2">AMPSase</shortName>
        <shortName evidence="2">AdSS</shortName>
        <ecNumber evidence="2">6.3.4.4</ecNumber>
    </recommendedName>
    <alternativeName>
        <fullName evidence="2">IMP--aspartate ligase</fullName>
    </alternativeName>
</protein>
<reference key="1">
    <citation type="journal article" date="2005" name="Science">
        <title>Genome sequence of Theileria parva, a bovine pathogen that transforms lymphocytes.</title>
        <authorList>
            <person name="Gardner M.J."/>
            <person name="Bishop R."/>
            <person name="Shah T."/>
            <person name="de Villiers E.P."/>
            <person name="Carlton J.M."/>
            <person name="Hall N."/>
            <person name="Ren Q."/>
            <person name="Paulsen I.T."/>
            <person name="Pain A."/>
            <person name="Berriman M."/>
            <person name="Wilson R.J.M."/>
            <person name="Sato S."/>
            <person name="Ralph S.A."/>
            <person name="Mann D.J."/>
            <person name="Xiong Z."/>
            <person name="Shallom S.J."/>
            <person name="Weidman J."/>
            <person name="Jiang L."/>
            <person name="Lynn J."/>
            <person name="Weaver B."/>
            <person name="Shoaibi A."/>
            <person name="Domingo A.R."/>
            <person name="Wasawo D."/>
            <person name="Crabtree J."/>
            <person name="Wortman J.R."/>
            <person name="Haas B."/>
            <person name="Angiuoli S.V."/>
            <person name="Creasy T.H."/>
            <person name="Lu C."/>
            <person name="Suh B."/>
            <person name="Silva J.C."/>
            <person name="Utterback T.R."/>
            <person name="Feldblyum T.V."/>
            <person name="Pertea M."/>
            <person name="Allen J."/>
            <person name="Nierman W.C."/>
            <person name="Taracha E.L.N."/>
            <person name="Salzberg S.L."/>
            <person name="White O.R."/>
            <person name="Fitzhugh H.A."/>
            <person name="Morzaria S."/>
            <person name="Venter J.C."/>
            <person name="Fraser C.M."/>
            <person name="Nene V."/>
        </authorList>
    </citation>
    <scope>NUCLEOTIDE SEQUENCE [LARGE SCALE GENOMIC DNA]</scope>
    <source>
        <strain>Muguga</strain>
    </source>
</reference>
<comment type="function">
    <text evidence="1">Plays an important role in the salvage pathway for purine nucleotide biosynthesis. Catalyzes the first committed step in the biosynthesis of AMP from IMP (By similarity).</text>
</comment>
<comment type="catalytic activity">
    <reaction evidence="2">
        <text>IMP + L-aspartate + GTP = N(6)-(1,2-dicarboxyethyl)-AMP + GDP + phosphate + 2 H(+)</text>
        <dbReference type="Rhea" id="RHEA:15753"/>
        <dbReference type="ChEBI" id="CHEBI:15378"/>
        <dbReference type="ChEBI" id="CHEBI:29991"/>
        <dbReference type="ChEBI" id="CHEBI:37565"/>
        <dbReference type="ChEBI" id="CHEBI:43474"/>
        <dbReference type="ChEBI" id="CHEBI:57567"/>
        <dbReference type="ChEBI" id="CHEBI:58053"/>
        <dbReference type="ChEBI" id="CHEBI:58189"/>
        <dbReference type="EC" id="6.3.4.4"/>
    </reaction>
</comment>
<comment type="cofactor">
    <cofactor evidence="2">
        <name>Mg(2+)</name>
        <dbReference type="ChEBI" id="CHEBI:18420"/>
    </cofactor>
    <text evidence="2">Binds 1 Mg(2+) ion per subunit.</text>
</comment>
<comment type="pathway">
    <text evidence="2">Purine metabolism; AMP biosynthesis via de novo pathway; AMP from IMP: step 1/2.</text>
</comment>
<comment type="subunit">
    <text evidence="2">Homodimer.</text>
</comment>
<comment type="subcellular location">
    <subcellularLocation>
        <location evidence="2">Cytoplasm</location>
    </subcellularLocation>
</comment>
<comment type="miscellaneous">
    <text>Parasitic protozoa lack the de novo purine biosynthesis pathway and rely exclusively on the salvage pathway for their purine nucleotide requirements.</text>
</comment>
<comment type="similarity">
    <text evidence="2">Belongs to the adenylosuccinate synthetase family.</text>
</comment>
<evidence type="ECO:0000250" key="1"/>
<evidence type="ECO:0000255" key="2">
    <source>
        <dbReference type="HAMAP-Rule" id="MF_03125"/>
    </source>
</evidence>
<organism>
    <name type="scientific">Theileria parva</name>
    <name type="common">East coast fever infection agent</name>
    <dbReference type="NCBI Taxonomy" id="5875"/>
    <lineage>
        <taxon>Eukaryota</taxon>
        <taxon>Sar</taxon>
        <taxon>Alveolata</taxon>
        <taxon>Apicomplexa</taxon>
        <taxon>Aconoidasida</taxon>
        <taxon>Piroplasmida</taxon>
        <taxon>Theileriidae</taxon>
        <taxon>Theileria</taxon>
    </lineage>
</organism>
<accession>Q4N3F4</accession>
<feature type="chain" id="PRO_0000399299" description="Adenylosuccinate synthetase">
    <location>
        <begin position="1"/>
        <end position="434"/>
    </location>
</feature>
<feature type="active site" description="Proton acceptor" evidence="2">
    <location>
        <position position="15"/>
    </location>
</feature>
<feature type="active site" description="Proton donor" evidence="2">
    <location>
        <position position="43"/>
    </location>
</feature>
<feature type="binding site" evidence="2">
    <location>
        <begin position="14"/>
        <end position="20"/>
    </location>
    <ligand>
        <name>GTP</name>
        <dbReference type="ChEBI" id="CHEBI:37565"/>
    </ligand>
</feature>
<feature type="binding site" description="in other chain" evidence="2">
    <location>
        <begin position="15"/>
        <end position="18"/>
    </location>
    <ligand>
        <name>IMP</name>
        <dbReference type="ChEBI" id="CHEBI:58053"/>
        <note>ligand shared between dimeric partners</note>
    </ligand>
</feature>
<feature type="binding site" evidence="2">
    <location>
        <position position="15"/>
    </location>
    <ligand>
        <name>Mg(2+)</name>
        <dbReference type="ChEBI" id="CHEBI:18420"/>
    </ligand>
</feature>
<feature type="binding site" description="in other chain" evidence="2">
    <location>
        <begin position="40"/>
        <end position="43"/>
    </location>
    <ligand>
        <name>IMP</name>
        <dbReference type="ChEBI" id="CHEBI:58053"/>
        <note>ligand shared between dimeric partners</note>
    </ligand>
</feature>
<feature type="binding site" evidence="2">
    <location>
        <begin position="42"/>
        <end position="44"/>
    </location>
    <ligand>
        <name>GTP</name>
        <dbReference type="ChEBI" id="CHEBI:37565"/>
    </ligand>
</feature>
<feature type="binding site" evidence="2">
    <location>
        <position position="42"/>
    </location>
    <ligand>
        <name>Mg(2+)</name>
        <dbReference type="ChEBI" id="CHEBI:18420"/>
    </ligand>
</feature>
<feature type="binding site" description="in other chain" evidence="2">
    <location>
        <position position="133"/>
    </location>
    <ligand>
        <name>IMP</name>
        <dbReference type="ChEBI" id="CHEBI:58053"/>
        <note>ligand shared between dimeric partners</note>
    </ligand>
</feature>
<feature type="binding site" evidence="2">
    <location>
        <position position="147"/>
    </location>
    <ligand>
        <name>IMP</name>
        <dbReference type="ChEBI" id="CHEBI:58053"/>
        <note>ligand shared between dimeric partners</note>
    </ligand>
</feature>
<feature type="binding site" description="in other chain" evidence="2">
    <location>
        <position position="229"/>
    </location>
    <ligand>
        <name>IMP</name>
        <dbReference type="ChEBI" id="CHEBI:58053"/>
        <note>ligand shared between dimeric partners</note>
    </ligand>
</feature>
<feature type="binding site" description="in other chain" evidence="2">
    <location>
        <position position="244"/>
    </location>
    <ligand>
        <name>IMP</name>
        <dbReference type="ChEBI" id="CHEBI:58053"/>
        <note>ligand shared between dimeric partners</note>
    </ligand>
</feature>
<feature type="binding site" evidence="2">
    <location>
        <begin position="304"/>
        <end position="310"/>
    </location>
    <ligand>
        <name>substrate</name>
    </ligand>
</feature>
<feature type="binding site" description="in other chain" evidence="2">
    <location>
        <position position="308"/>
    </location>
    <ligand>
        <name>IMP</name>
        <dbReference type="ChEBI" id="CHEBI:58053"/>
        <note>ligand shared between dimeric partners</note>
    </ligand>
</feature>
<feature type="binding site" evidence="2">
    <location>
        <position position="310"/>
    </location>
    <ligand>
        <name>GTP</name>
        <dbReference type="ChEBI" id="CHEBI:37565"/>
    </ligand>
</feature>
<feature type="binding site" evidence="2">
    <location>
        <begin position="336"/>
        <end position="338"/>
    </location>
    <ligand>
        <name>GTP</name>
        <dbReference type="ChEBI" id="CHEBI:37565"/>
    </ligand>
</feature>
<feature type="binding site" evidence="2">
    <location>
        <begin position="422"/>
        <end position="424"/>
    </location>
    <ligand>
        <name>GTP</name>
        <dbReference type="ChEBI" id="CHEBI:37565"/>
    </ligand>
</feature>
<proteinExistence type="inferred from homology"/>
<sequence length="434" mass="49035">MLFQVVLISGMQWGDEGKGKLVSLLSKDFDLVARYNGGHNSGHELFLDGVKYKLHLLPCGCLYPNTVNVLGNGVVVHLESLINEIDNLTKLGVDLTNRLFISERAHLVFDLHIAVDAQLENEQGEHSTSIGTTKRGIGPTNSTKCKRTGIQIGEMLNWDNFEKLLSKLTYKLCHENKVFTNSDTRDLLNKQLEQHKVNFSKIADSVVDTSYMIQKYIKEGKKVFFEGANGSLLDLALGTYPYVTSSNTTTSGVYNGLGINPNVKILKVGVLKAYQTRVGKGPFPTELFDENFNKLQKFGAEFGVTTGRVRRCGWLDLVAAKYVQNFSGFDLINLSKLDILSQFDEIKLCTHYKHKLTGKLLEEGRYPSCCYQYDEYEPVYKTMPGWKTDISKFKTFEELPQNAQNYVLFIEEYLGVFIYWIGTGRDVNSMIVRT</sequence>
<name>PURA_THEPA</name>